<gene>
    <name evidence="10" type="primary">Rab35</name>
</gene>
<evidence type="ECO:0000250" key="1"/>
<evidence type="ECO:0000250" key="2">
    <source>
        <dbReference type="UniProtKB" id="Q15286"/>
    </source>
</evidence>
<evidence type="ECO:0000269" key="3">
    <source>
    </source>
</evidence>
<evidence type="ECO:0000269" key="4">
    <source>
    </source>
</evidence>
<evidence type="ECO:0000269" key="5">
    <source>
    </source>
</evidence>
<evidence type="ECO:0000269" key="6">
    <source>
    </source>
</evidence>
<evidence type="ECO:0000269" key="7">
    <source>
    </source>
</evidence>
<evidence type="ECO:0000305" key="8"/>
<evidence type="ECO:0000305" key="9">
    <source>
    </source>
</evidence>
<evidence type="ECO:0000312" key="10">
    <source>
        <dbReference type="MGI" id="MGI:1924657"/>
    </source>
</evidence>
<name>RAB35_MOUSE</name>
<protein>
    <recommendedName>
        <fullName>Ras-related protein Rab-35</fullName>
        <ecNumber evidence="4">3.6.5.2</ecNumber>
    </recommendedName>
</protein>
<organism>
    <name type="scientific">Mus musculus</name>
    <name type="common">Mouse</name>
    <dbReference type="NCBI Taxonomy" id="10090"/>
    <lineage>
        <taxon>Eukaryota</taxon>
        <taxon>Metazoa</taxon>
        <taxon>Chordata</taxon>
        <taxon>Craniata</taxon>
        <taxon>Vertebrata</taxon>
        <taxon>Euteleostomi</taxon>
        <taxon>Mammalia</taxon>
        <taxon>Eutheria</taxon>
        <taxon>Euarchontoglires</taxon>
        <taxon>Glires</taxon>
        <taxon>Rodentia</taxon>
        <taxon>Myomorpha</taxon>
        <taxon>Muroidea</taxon>
        <taxon>Muridae</taxon>
        <taxon>Murinae</taxon>
        <taxon>Mus</taxon>
        <taxon>Mus</taxon>
    </lineage>
</organism>
<keyword id="KW-1003">Cell membrane</keyword>
<keyword id="KW-0168">Coated pit</keyword>
<keyword id="KW-0968">Cytoplasmic vesicle</keyword>
<keyword id="KW-0903">Direct protein sequencing</keyword>
<keyword id="KW-0967">Endosome</keyword>
<keyword id="KW-0342">GTP-binding</keyword>
<keyword id="KW-0378">Hydrolase</keyword>
<keyword id="KW-0449">Lipoprotein</keyword>
<keyword id="KW-0460">Magnesium</keyword>
<keyword id="KW-0472">Membrane</keyword>
<keyword id="KW-0479">Metal-binding</keyword>
<keyword id="KW-0547">Nucleotide-binding</keyword>
<keyword id="KW-0597">Phosphoprotein</keyword>
<keyword id="KW-0636">Prenylation</keyword>
<keyword id="KW-0653">Protein transport</keyword>
<keyword id="KW-1185">Reference proteome</keyword>
<keyword id="KW-0813">Transport</keyword>
<dbReference type="EC" id="3.6.5.2" evidence="4"/>
<dbReference type="EMBL" id="BC056466">
    <property type="protein sequence ID" value="AAH56466.1"/>
    <property type="molecule type" value="mRNA"/>
</dbReference>
<dbReference type="CCDS" id="CCDS19596.1"/>
<dbReference type="RefSeq" id="NP_937806.1">
    <property type="nucleotide sequence ID" value="NM_198163.1"/>
</dbReference>
<dbReference type="SMR" id="Q6PHN9"/>
<dbReference type="BioGRID" id="218674">
    <property type="interactions" value="10"/>
</dbReference>
<dbReference type="DIP" id="DIP-38238N"/>
<dbReference type="FunCoup" id="Q6PHN9">
    <property type="interactions" value="3016"/>
</dbReference>
<dbReference type="IntAct" id="Q6PHN9">
    <property type="interactions" value="19"/>
</dbReference>
<dbReference type="MINT" id="Q6PHN9"/>
<dbReference type="STRING" id="10090.ENSMUSP00000031492"/>
<dbReference type="ChEMBL" id="CHEMBL4523349"/>
<dbReference type="GlyGen" id="Q6PHN9">
    <property type="glycosylation" value="1 site, 1 O-linked glycan (1 site)"/>
</dbReference>
<dbReference type="iPTMnet" id="Q6PHN9"/>
<dbReference type="MetOSite" id="Q6PHN9"/>
<dbReference type="PhosphoSitePlus" id="Q6PHN9"/>
<dbReference type="SwissPalm" id="Q6PHN9"/>
<dbReference type="jPOST" id="Q6PHN9"/>
<dbReference type="PaxDb" id="10090-ENSMUSP00000031492"/>
<dbReference type="ProteomicsDB" id="255065"/>
<dbReference type="Pumba" id="Q6PHN9"/>
<dbReference type="Antibodypedia" id="45490">
    <property type="antibodies" value="298 antibodies from 32 providers"/>
</dbReference>
<dbReference type="DNASU" id="77407"/>
<dbReference type="Ensembl" id="ENSMUST00000031492.15">
    <property type="protein sequence ID" value="ENSMUSP00000031492.9"/>
    <property type="gene ID" value="ENSMUSG00000029518.16"/>
</dbReference>
<dbReference type="GeneID" id="77407"/>
<dbReference type="KEGG" id="mmu:77407"/>
<dbReference type="UCSC" id="uc008zei.1">
    <property type="organism name" value="mouse"/>
</dbReference>
<dbReference type="AGR" id="MGI:1924657"/>
<dbReference type="CTD" id="11021"/>
<dbReference type="MGI" id="MGI:1924657">
    <property type="gene designation" value="Rab35"/>
</dbReference>
<dbReference type="VEuPathDB" id="HostDB:ENSMUSG00000029518"/>
<dbReference type="eggNOG" id="KOG0079">
    <property type="taxonomic scope" value="Eukaryota"/>
</dbReference>
<dbReference type="GeneTree" id="ENSGT00940000158557"/>
<dbReference type="HOGENOM" id="CLU_041217_10_1_1"/>
<dbReference type="InParanoid" id="Q6PHN9"/>
<dbReference type="OMA" id="HEIDTNC"/>
<dbReference type="OrthoDB" id="9989112at2759"/>
<dbReference type="PhylomeDB" id="Q6PHN9"/>
<dbReference type="TreeFam" id="TF105954"/>
<dbReference type="Reactome" id="R-MMU-8854214">
    <property type="pathway name" value="TBC/RABGAPs"/>
</dbReference>
<dbReference type="Reactome" id="R-MMU-8873719">
    <property type="pathway name" value="RAB geranylgeranylation"/>
</dbReference>
<dbReference type="Reactome" id="R-MMU-8876198">
    <property type="pathway name" value="RAB GEFs exchange GTP for GDP on RABs"/>
</dbReference>
<dbReference type="BioGRID-ORCS" id="77407">
    <property type="hits" value="12 hits in 77 CRISPR screens"/>
</dbReference>
<dbReference type="CD-CODE" id="CE726F99">
    <property type="entry name" value="Postsynaptic density"/>
</dbReference>
<dbReference type="ChiTaRS" id="Rab35">
    <property type="organism name" value="mouse"/>
</dbReference>
<dbReference type="PRO" id="PR:Q6PHN9"/>
<dbReference type="Proteomes" id="UP000000589">
    <property type="component" value="Chromosome 5"/>
</dbReference>
<dbReference type="RNAct" id="Q6PHN9">
    <property type="molecule type" value="protein"/>
</dbReference>
<dbReference type="Bgee" id="ENSMUSG00000029518">
    <property type="expression patterns" value="Expressed in granulocyte and 66 other cell types or tissues"/>
</dbReference>
<dbReference type="ExpressionAtlas" id="Q6PHN9">
    <property type="expression patterns" value="baseline and differential"/>
</dbReference>
<dbReference type="GO" id="GO:0031253">
    <property type="term" value="C:cell projection membrane"/>
    <property type="evidence" value="ECO:0007669"/>
    <property type="project" value="Ensembl"/>
</dbReference>
<dbReference type="GO" id="GO:0045334">
    <property type="term" value="C:clathrin-coated endocytic vesicle"/>
    <property type="evidence" value="ECO:0007669"/>
    <property type="project" value="Ensembl"/>
</dbReference>
<dbReference type="GO" id="GO:0005905">
    <property type="term" value="C:clathrin-coated pit"/>
    <property type="evidence" value="ECO:0007669"/>
    <property type="project" value="UniProtKB-SubCell"/>
</dbReference>
<dbReference type="GO" id="GO:0010008">
    <property type="term" value="C:endosome membrane"/>
    <property type="evidence" value="ECO:0000250"/>
    <property type="project" value="UniProtKB"/>
</dbReference>
<dbReference type="GO" id="GO:0045171">
    <property type="term" value="C:intercellular bridge"/>
    <property type="evidence" value="ECO:0007669"/>
    <property type="project" value="Ensembl"/>
</dbReference>
<dbReference type="GO" id="GO:0042470">
    <property type="term" value="C:melanosome"/>
    <property type="evidence" value="ECO:0007669"/>
    <property type="project" value="UniProtKB-SubCell"/>
</dbReference>
<dbReference type="GO" id="GO:0005739">
    <property type="term" value="C:mitochondrion"/>
    <property type="evidence" value="ECO:0007005"/>
    <property type="project" value="MGI"/>
</dbReference>
<dbReference type="GO" id="GO:0005886">
    <property type="term" value="C:plasma membrane"/>
    <property type="evidence" value="ECO:0000250"/>
    <property type="project" value="UniProtKB"/>
</dbReference>
<dbReference type="GO" id="GO:0003925">
    <property type="term" value="F:G protein activity"/>
    <property type="evidence" value="ECO:0000314"/>
    <property type="project" value="UniProtKB"/>
</dbReference>
<dbReference type="GO" id="GO:0019003">
    <property type="term" value="F:GDP binding"/>
    <property type="evidence" value="ECO:0000250"/>
    <property type="project" value="UniProtKB"/>
</dbReference>
<dbReference type="GO" id="GO:0005525">
    <property type="term" value="F:GTP binding"/>
    <property type="evidence" value="ECO:0000250"/>
    <property type="project" value="UniProtKB"/>
</dbReference>
<dbReference type="GO" id="GO:0003924">
    <property type="term" value="F:GTPase activity"/>
    <property type="evidence" value="ECO:0000314"/>
    <property type="project" value="UniProtKB"/>
</dbReference>
<dbReference type="GO" id="GO:0005546">
    <property type="term" value="F:phosphatidylinositol-4,5-bisphosphate binding"/>
    <property type="evidence" value="ECO:0007669"/>
    <property type="project" value="Ensembl"/>
</dbReference>
<dbReference type="GO" id="GO:0019882">
    <property type="term" value="P:antigen processing and presentation"/>
    <property type="evidence" value="ECO:0007669"/>
    <property type="project" value="Ensembl"/>
</dbReference>
<dbReference type="GO" id="GO:1990090">
    <property type="term" value="P:cellular response to nerve growth factor stimulus"/>
    <property type="evidence" value="ECO:0000250"/>
    <property type="project" value="UniProtKB"/>
</dbReference>
<dbReference type="GO" id="GO:0016197">
    <property type="term" value="P:endosomal transport"/>
    <property type="evidence" value="ECO:0000250"/>
    <property type="project" value="UniProtKB"/>
</dbReference>
<dbReference type="GO" id="GO:0000281">
    <property type="term" value="P:mitotic cytokinesis"/>
    <property type="evidence" value="ECO:0007669"/>
    <property type="project" value="Ensembl"/>
</dbReference>
<dbReference type="GO" id="GO:0031175">
    <property type="term" value="P:neuron projection development"/>
    <property type="evidence" value="ECO:0000315"/>
    <property type="project" value="UniProtKB"/>
</dbReference>
<dbReference type="GO" id="GO:0048227">
    <property type="term" value="P:plasma membrane to endosome transport"/>
    <property type="evidence" value="ECO:0007669"/>
    <property type="project" value="Ensembl"/>
</dbReference>
<dbReference type="GO" id="GO:0036010">
    <property type="term" value="P:protein localization to endosome"/>
    <property type="evidence" value="ECO:0000250"/>
    <property type="project" value="UniProtKB"/>
</dbReference>
<dbReference type="GO" id="GO:0015031">
    <property type="term" value="P:protein transport"/>
    <property type="evidence" value="ECO:0007669"/>
    <property type="project" value="UniProtKB-KW"/>
</dbReference>
<dbReference type="GO" id="GO:0032482">
    <property type="term" value="P:Rab protein signal transduction"/>
    <property type="evidence" value="ECO:0007669"/>
    <property type="project" value="InterPro"/>
</dbReference>
<dbReference type="CDD" id="cd04110">
    <property type="entry name" value="Rab35"/>
    <property type="match status" value="1"/>
</dbReference>
<dbReference type="FunFam" id="3.40.50.300:FF:000404">
    <property type="entry name" value="Putative ras-related protein Rab-35"/>
    <property type="match status" value="1"/>
</dbReference>
<dbReference type="Gene3D" id="3.40.50.300">
    <property type="entry name" value="P-loop containing nucleotide triphosphate hydrolases"/>
    <property type="match status" value="1"/>
</dbReference>
<dbReference type="InterPro" id="IPR027417">
    <property type="entry name" value="P-loop_NTPase"/>
</dbReference>
<dbReference type="InterPro" id="IPR050227">
    <property type="entry name" value="Rab"/>
</dbReference>
<dbReference type="InterPro" id="IPR041815">
    <property type="entry name" value="Rab35"/>
</dbReference>
<dbReference type="InterPro" id="IPR005225">
    <property type="entry name" value="Small_GTP-bd"/>
</dbReference>
<dbReference type="InterPro" id="IPR001806">
    <property type="entry name" value="Small_GTPase"/>
</dbReference>
<dbReference type="NCBIfam" id="TIGR00231">
    <property type="entry name" value="small_GTP"/>
    <property type="match status" value="1"/>
</dbReference>
<dbReference type="PANTHER" id="PTHR47977">
    <property type="entry name" value="RAS-RELATED PROTEIN RAB"/>
    <property type="match status" value="1"/>
</dbReference>
<dbReference type="Pfam" id="PF00071">
    <property type="entry name" value="Ras"/>
    <property type="match status" value="1"/>
</dbReference>
<dbReference type="PRINTS" id="PR00449">
    <property type="entry name" value="RASTRNSFRMNG"/>
</dbReference>
<dbReference type="SMART" id="SM00177">
    <property type="entry name" value="ARF"/>
    <property type="match status" value="1"/>
</dbReference>
<dbReference type="SMART" id="SM00175">
    <property type="entry name" value="RAB"/>
    <property type="match status" value="1"/>
</dbReference>
<dbReference type="SMART" id="SM00176">
    <property type="entry name" value="RAN"/>
    <property type="match status" value="1"/>
</dbReference>
<dbReference type="SMART" id="SM00173">
    <property type="entry name" value="RAS"/>
    <property type="match status" value="1"/>
</dbReference>
<dbReference type="SMART" id="SM00174">
    <property type="entry name" value="RHO"/>
    <property type="match status" value="1"/>
</dbReference>
<dbReference type="SUPFAM" id="SSF52540">
    <property type="entry name" value="P-loop containing nucleoside triphosphate hydrolases"/>
    <property type="match status" value="1"/>
</dbReference>
<dbReference type="PROSITE" id="PS51419">
    <property type="entry name" value="RAB"/>
    <property type="match status" value="1"/>
</dbReference>
<sequence length="201" mass="23025">MARDYDHLFKLLIIGDSGVGKSSLLLRFADNTFSGSYITTIGVDFKIRTVEINGEKVKLQIWDTAGQERFRTITSTYYRGTHGVIVVYDVTSAESFVNVKRWLHEINQNCDDVCRILVGNKNDDPERKVVETEDAYKFAGQMGIQLFETSAKENVNVEEMFNCITELVLRAKKDNLAKQQQQQQNDVVKLTKNSKRKKRCC</sequence>
<reference key="1">
    <citation type="journal article" date="2004" name="Genome Res.">
        <title>The status, quality, and expansion of the NIH full-length cDNA project: the Mammalian Gene Collection (MGC).</title>
        <authorList>
            <consortium name="The MGC Project Team"/>
        </authorList>
    </citation>
    <scope>NUCLEOTIDE SEQUENCE [LARGE SCALE MRNA]</scope>
    <source>
        <strain>C57BL/6J</strain>
        <tissue>Brain</tissue>
    </source>
</reference>
<reference key="2">
    <citation type="submission" date="2007-04" db="UniProtKB">
        <authorList>
            <person name="Lubec G."/>
            <person name="Kang S.U."/>
        </authorList>
    </citation>
    <scope>PROTEIN SEQUENCE OF 11-21; 59-69 AND 129-137</scope>
    <scope>IDENTIFICATION BY MASS SPECTROMETRY</scope>
    <source>
        <strain>C57BL/6J</strain>
        <tissue>Brain</tissue>
    </source>
</reference>
<reference key="3">
    <citation type="journal article" date="2010" name="Cell">
        <title>A tissue-specific atlas of mouse protein phosphorylation and expression.</title>
        <authorList>
            <person name="Huttlin E.L."/>
            <person name="Jedrychowski M.P."/>
            <person name="Elias J.E."/>
            <person name="Goswami T."/>
            <person name="Rad R."/>
            <person name="Beausoleil S.A."/>
            <person name="Villen J."/>
            <person name="Haas W."/>
            <person name="Sowa M.E."/>
            <person name="Gygi S.P."/>
        </authorList>
    </citation>
    <scope>IDENTIFICATION BY MASS SPECTROMETRY [LARGE SCALE ANALYSIS]</scope>
    <source>
        <tissue>Brain</tissue>
        <tissue>Brown adipose tissue</tissue>
        <tissue>Heart</tissue>
        <tissue>Kidney</tissue>
        <tissue>Liver</tissue>
        <tissue>Lung</tissue>
        <tissue>Pancreas</tissue>
        <tissue>Spleen</tissue>
        <tissue>Testis</tissue>
    </source>
</reference>
<reference key="4">
    <citation type="journal article" date="2010" name="Mol. Cell">
        <title>The Connecdenn DENN domain: a GEF for Rab35 mediating cargo-specific exit from early endosomes.</title>
        <authorList>
            <person name="Allaire P.D."/>
            <person name="Marat A.L."/>
            <person name="Dall'Armi C."/>
            <person name="Di Paolo G."/>
            <person name="McPherson P.S."/>
            <person name="Ritter B."/>
        </authorList>
    </citation>
    <scope>FUNCTION</scope>
    <scope>ACTIVITY REGULATION</scope>
    <scope>INTERACTION WITH DENND1A</scope>
    <scope>MUTAGENESIS OF SER-22 AND GLN-67</scope>
</reference>
<reference key="5">
    <citation type="journal article" date="2012" name="Traffic">
        <title>TBC1D13 is a RAB35 specific GAP that plays an important role in GLUT4 trafficking in adipocytes.</title>
        <authorList>
            <person name="Davey J.R."/>
            <person name="Humphrey S.J."/>
            <person name="Junutula J.R."/>
            <person name="Mishra A.K."/>
            <person name="Lambright D.G."/>
            <person name="James D.E."/>
            <person name="Stoeckli J."/>
        </authorList>
    </citation>
    <scope>FUNCTION</scope>
    <scope>CATALYTIC ACTIVITY</scope>
    <scope>ACTIVITY REGULATION</scope>
</reference>
<reference key="6">
    <citation type="journal article" date="2013" name="J. Cell Sci.">
        <title>Rab35 establishes the EHD1-association site by coordinating two distinct effectors during neurite outgrowth.</title>
        <authorList>
            <person name="Kobayashi H."/>
            <person name="Fukuda M."/>
        </authorList>
    </citation>
    <scope>FUNCTION IN NEURITE OUTGROWTH</scope>
    <scope>INTERACTION WITH ACAP2; EHD1 AND MICALL1</scope>
    <scope>MUTAGENESIS OF SER-22</scope>
</reference>
<reference key="7">
    <citation type="journal article" date="2016" name="Cell">
        <title>Regulation of T cell receptor signaling by DENND1B in TH2 cells and allergic disease.</title>
        <authorList>
            <person name="Yang C.W."/>
            <person name="Hojer C.D."/>
            <person name="Zhou M."/>
            <person name="Wu X."/>
            <person name="Wuster A."/>
            <person name="Lee W.P."/>
            <person name="Yaspan B.L."/>
            <person name="Chan A.C."/>
        </authorList>
    </citation>
    <scope>INTERACTION WITH DENND1B</scope>
    <scope>ACTIVITY REGULATION</scope>
</reference>
<reference key="8">
    <citation type="journal article" date="2017" name="Elife">
        <title>Systematic proteomic analysis of LRRK2-mediated Rab GTPase phosphorylation establishes a connection to ciliogenesis.</title>
        <authorList>
            <person name="Steger M."/>
            <person name="Diez F."/>
            <person name="Dhekne H.S."/>
            <person name="Lis P."/>
            <person name="Nirujogi R.S."/>
            <person name="Karayel O."/>
            <person name="Tonelli F."/>
            <person name="Martinez T.N."/>
            <person name="Lorentzen E."/>
            <person name="Pfeffer S.R."/>
            <person name="Alessi D.R."/>
            <person name="Mann M."/>
        </authorList>
    </citation>
    <scope>PHOSPHORYLATION AT THR-72</scope>
</reference>
<feature type="chain" id="PRO_0000121246" description="Ras-related protein Rab-35">
    <location>
        <begin position="1"/>
        <end position="201"/>
    </location>
</feature>
<feature type="short sequence motif" description="Switch 1" evidence="2">
    <location>
        <begin position="30"/>
        <end position="42"/>
    </location>
</feature>
<feature type="short sequence motif" description="Effector region" evidence="1">
    <location>
        <begin position="37"/>
        <end position="45"/>
    </location>
</feature>
<feature type="short sequence motif" description="Switch 2" evidence="2">
    <location>
        <begin position="64"/>
        <end position="80"/>
    </location>
</feature>
<feature type="binding site" evidence="2">
    <location>
        <position position="18"/>
    </location>
    <ligand>
        <name>GTP</name>
        <dbReference type="ChEBI" id="CHEBI:37565"/>
    </ligand>
</feature>
<feature type="binding site" evidence="2">
    <location>
        <position position="19"/>
    </location>
    <ligand>
        <name>GTP</name>
        <dbReference type="ChEBI" id="CHEBI:37565"/>
    </ligand>
</feature>
<feature type="binding site" evidence="2">
    <location>
        <position position="20"/>
    </location>
    <ligand>
        <name>GTP</name>
        <dbReference type="ChEBI" id="CHEBI:37565"/>
    </ligand>
</feature>
<feature type="binding site" evidence="2">
    <location>
        <position position="21"/>
    </location>
    <ligand>
        <name>GTP</name>
        <dbReference type="ChEBI" id="CHEBI:37565"/>
    </ligand>
</feature>
<feature type="binding site" evidence="2">
    <location>
        <position position="22"/>
    </location>
    <ligand>
        <name>GTP</name>
        <dbReference type="ChEBI" id="CHEBI:37565"/>
    </ligand>
</feature>
<feature type="binding site" evidence="2">
    <location>
        <position position="22"/>
    </location>
    <ligand>
        <name>Mg(2+)</name>
        <dbReference type="ChEBI" id="CHEBI:18420"/>
    </ligand>
</feature>
<feature type="binding site" evidence="2">
    <location>
        <position position="23"/>
    </location>
    <ligand>
        <name>GTP</name>
        <dbReference type="ChEBI" id="CHEBI:37565"/>
    </ligand>
</feature>
<feature type="binding site" evidence="2">
    <location>
        <position position="34"/>
    </location>
    <ligand>
        <name>GTP</name>
        <dbReference type="ChEBI" id="CHEBI:37565"/>
    </ligand>
</feature>
<feature type="binding site" evidence="2">
    <location>
        <position position="35"/>
    </location>
    <ligand>
        <name>GTP</name>
        <dbReference type="ChEBI" id="CHEBI:37565"/>
    </ligand>
</feature>
<feature type="binding site" evidence="2">
    <location>
        <position position="37"/>
    </location>
    <ligand>
        <name>GTP</name>
        <dbReference type="ChEBI" id="CHEBI:37565"/>
    </ligand>
</feature>
<feature type="binding site" evidence="2">
    <location>
        <position position="39"/>
    </location>
    <ligand>
        <name>GTP</name>
        <dbReference type="ChEBI" id="CHEBI:37565"/>
    </ligand>
</feature>
<feature type="binding site" evidence="2">
    <location>
        <position position="40"/>
    </location>
    <ligand>
        <name>GTP</name>
        <dbReference type="ChEBI" id="CHEBI:37565"/>
    </ligand>
</feature>
<feature type="binding site" evidence="2">
    <location>
        <position position="40"/>
    </location>
    <ligand>
        <name>Mg(2+)</name>
        <dbReference type="ChEBI" id="CHEBI:18420"/>
    </ligand>
</feature>
<feature type="binding site" evidence="2">
    <location>
        <position position="63"/>
    </location>
    <ligand>
        <name>Mg(2+)</name>
        <dbReference type="ChEBI" id="CHEBI:18420"/>
    </ligand>
</feature>
<feature type="binding site" evidence="2">
    <location>
        <position position="66"/>
    </location>
    <ligand>
        <name>GTP</name>
        <dbReference type="ChEBI" id="CHEBI:37565"/>
    </ligand>
</feature>
<feature type="binding site" evidence="2">
    <location>
        <position position="120"/>
    </location>
    <ligand>
        <name>GTP</name>
        <dbReference type="ChEBI" id="CHEBI:37565"/>
    </ligand>
</feature>
<feature type="binding site" evidence="2">
    <location>
        <position position="121"/>
    </location>
    <ligand>
        <name>GTP</name>
        <dbReference type="ChEBI" id="CHEBI:37565"/>
    </ligand>
</feature>
<feature type="binding site" evidence="2">
    <location>
        <position position="123"/>
    </location>
    <ligand>
        <name>GTP</name>
        <dbReference type="ChEBI" id="CHEBI:37565"/>
    </ligand>
</feature>
<feature type="binding site" evidence="2">
    <location>
        <position position="151"/>
    </location>
    <ligand>
        <name>GTP</name>
        <dbReference type="ChEBI" id="CHEBI:37565"/>
    </ligand>
</feature>
<feature type="binding site" evidence="2">
    <location>
        <position position="152"/>
    </location>
    <ligand>
        <name>GTP</name>
        <dbReference type="ChEBI" id="CHEBI:37565"/>
    </ligand>
</feature>
<feature type="modified residue" description="Phosphothreonine; by LRRK2" evidence="7">
    <location>
        <position position="72"/>
    </location>
</feature>
<feature type="modified residue" description="O-(2-cholinephosphoryl)serine" evidence="2">
    <location>
        <position position="75"/>
    </location>
</feature>
<feature type="lipid moiety-binding region" description="S-geranylgeranyl cysteine" evidence="1">
    <location>
        <position position="200"/>
    </location>
</feature>
<feature type="lipid moiety-binding region" description="S-geranylgeranyl cysteine" evidence="1">
    <location>
        <position position="201"/>
    </location>
</feature>
<feature type="mutagenesis site" description="Loss of interaction with MICALL1." evidence="3 5">
    <original>S</original>
    <variation>N</variation>
    <location>
        <position position="22"/>
    </location>
</feature>
<feature type="mutagenesis site" description="Loss of GTPase activity. Increased fast recycling." evidence="3">
    <original>Q</original>
    <variation>L</variation>
    <location>
        <position position="67"/>
    </location>
</feature>
<proteinExistence type="evidence at protein level"/>
<comment type="function">
    <text evidence="2 3 4 5">The small GTPases Rab are key regulators of intracellular membrane trafficking, from the formation of transport vesicles to their fusion with membranes. Rabs cycle between an inactive GDP-bound form and an active GTP-bound form that is able to recruit to membranes different sets of downstream effectors directly responsible for vesicle formation, movement, tethering and fusion (PubMed:20159556, PubMed:22762500). RAB35 is involved in the process of endocytosis and is an essential rate-limiting regulator of the fast recycling pathway back to the plasma membrane (PubMed:20159556). During cytokinesis, required for the postfurrowing terminal steps, namely for intercellular bridge stability and abscission, possibly by controlling phosphatidylinositol 4,5-bis phosphate (PIP2) and SEPT2 localization at the intercellular bridge (By similarity). May indirectly regulate neurite outgrowth (PubMed:23572513). Together with TBC1D13 may be involved in regulation of insulin-induced glucose transporter SLC2A4/GLUT4 translocation to the plasma membrane in adipocytes (PubMed:22762500).</text>
</comment>
<comment type="catalytic activity">
    <reaction evidence="4">
        <text>GTP + H2O = GDP + phosphate + H(+)</text>
        <dbReference type="Rhea" id="RHEA:19669"/>
        <dbReference type="ChEBI" id="CHEBI:15377"/>
        <dbReference type="ChEBI" id="CHEBI:15378"/>
        <dbReference type="ChEBI" id="CHEBI:37565"/>
        <dbReference type="ChEBI" id="CHEBI:43474"/>
        <dbReference type="ChEBI" id="CHEBI:58189"/>
        <dbReference type="EC" id="3.6.5.2"/>
    </reaction>
    <physiologicalReaction direction="left-to-right" evidence="9">
        <dbReference type="Rhea" id="RHEA:19670"/>
    </physiologicalReaction>
</comment>
<comment type="cofactor">
    <cofactor evidence="2">
        <name>Mg(2+)</name>
        <dbReference type="ChEBI" id="CHEBI:18420"/>
    </cofactor>
</comment>
<comment type="activity regulation">
    <text evidence="3 4 6 8">Regulated by guanine nucleotide exchange factors (GEFs) including DENND1A, DENND1B and DENND1C which promote the exchange of bound GDP for free GTP (PubMed:20159556, PubMed:26774822). Regulated by GTPase activating proteins (GAPs) including TBC1D10 and TBC1D13 which increase GTP hydrolysis activity (PubMed:22762500). Inhibited by GDP dissociation inhibitors (GDIs) which prevent Rab-GDP dissociation (Probable).</text>
</comment>
<comment type="subunit">
    <text evidence="2 3 5 6">Interacts with DENND1A and DENND1B; in a nucleotide-dependent manner (PubMed:20159556, PubMed:26774822). Interacts with DENND1C; weak interaction which is nucleotide-independent (By similarity). Interacts (GTP-bound form) with ACAP2, RUSC2, OCRL MICAL1 and MICALL1; the interaction is direct and probably recruits these effectors to membranes (PubMed:23572513). Interacts with EHD1; the interaction is indirect through MICALL1 and probably recruits EHD1 to membranes (PubMed:23572513). Interacts with GDI1, GDI2, CHM and CHML; phosphorylation at Thr-72 disrupts these interactions (By similarity).</text>
</comment>
<comment type="subcellular location">
    <subcellularLocation>
        <location evidence="2">Cell membrane</location>
        <topology evidence="8">Lipid-anchor</topology>
        <orientation evidence="8">Cytoplasmic side</orientation>
    </subcellularLocation>
    <subcellularLocation>
        <location evidence="2">Membrane</location>
        <location evidence="2">Clathrin-coated pit</location>
    </subcellularLocation>
    <subcellularLocation>
        <location evidence="2">Cytoplasmic vesicle</location>
        <location evidence="2">Clathrin-coated vesicle</location>
    </subcellularLocation>
    <subcellularLocation>
        <location evidence="2">Endosome</location>
    </subcellularLocation>
    <subcellularLocation>
        <location evidence="2">Melanosome</location>
    </subcellularLocation>
    <text evidence="2">Present on sorting endosomes and recycling endosome tubules. Tends to be enriched in PIP2-positive cell membrane domains. During mitosis, associated with the plasma membrane and present at the ingressing furrow during early cytokinesis as well as at the intercellular bridge later during cytokinesis. Identified in stage I to stage IV melanosomes.</text>
</comment>
<comment type="domain">
    <text evidence="2">Switch 1, switch 2 and the interswitch regions are characteristic of Rab GTPases and mediate the interactions with Rab downstream effectors. The switch regions undergo conformational changes upon nucleotide binding which drives interaction with specific sets of effector proteins, with most effectors only binding to GTP-bound Rab.</text>
</comment>
<comment type="similarity">
    <text evidence="8">Belongs to the small GTPase superfamily. Rab family.</text>
</comment>
<accession>Q6PHN9</accession>